<evidence type="ECO:0000255" key="1">
    <source>
        <dbReference type="HAMAP-Rule" id="MF_01631"/>
    </source>
</evidence>
<accession>Q9PE88</accession>
<proteinExistence type="inferred from homology"/>
<dbReference type="EC" id="2.7.7.23" evidence="1"/>
<dbReference type="EC" id="2.3.1.157" evidence="1"/>
<dbReference type="EMBL" id="AE003849">
    <property type="protein sequence ID" value="AAF83950.1"/>
    <property type="molecule type" value="Genomic_DNA"/>
</dbReference>
<dbReference type="PIR" id="C82720">
    <property type="entry name" value="C82720"/>
</dbReference>
<dbReference type="SMR" id="Q9PE88"/>
<dbReference type="STRING" id="160492.XF_1140"/>
<dbReference type="KEGG" id="xfa:XF_1140"/>
<dbReference type="PATRIC" id="fig|160492.11.peg.1205"/>
<dbReference type="eggNOG" id="COG1207">
    <property type="taxonomic scope" value="Bacteria"/>
</dbReference>
<dbReference type="HOGENOM" id="CLU_029499_15_2_6"/>
<dbReference type="UniPathway" id="UPA00113">
    <property type="reaction ID" value="UER00532"/>
</dbReference>
<dbReference type="UniPathway" id="UPA00113">
    <property type="reaction ID" value="UER00533"/>
</dbReference>
<dbReference type="UniPathway" id="UPA00973"/>
<dbReference type="Proteomes" id="UP000000812">
    <property type="component" value="Chromosome"/>
</dbReference>
<dbReference type="GO" id="GO:0005737">
    <property type="term" value="C:cytoplasm"/>
    <property type="evidence" value="ECO:0007669"/>
    <property type="project" value="UniProtKB-SubCell"/>
</dbReference>
<dbReference type="GO" id="GO:0016020">
    <property type="term" value="C:membrane"/>
    <property type="evidence" value="ECO:0007669"/>
    <property type="project" value="GOC"/>
</dbReference>
<dbReference type="GO" id="GO:0019134">
    <property type="term" value="F:glucosamine-1-phosphate N-acetyltransferase activity"/>
    <property type="evidence" value="ECO:0007669"/>
    <property type="project" value="UniProtKB-UniRule"/>
</dbReference>
<dbReference type="GO" id="GO:0000287">
    <property type="term" value="F:magnesium ion binding"/>
    <property type="evidence" value="ECO:0007669"/>
    <property type="project" value="UniProtKB-UniRule"/>
</dbReference>
<dbReference type="GO" id="GO:0003977">
    <property type="term" value="F:UDP-N-acetylglucosamine diphosphorylase activity"/>
    <property type="evidence" value="ECO:0007669"/>
    <property type="project" value="UniProtKB-UniRule"/>
</dbReference>
<dbReference type="GO" id="GO:0000902">
    <property type="term" value="P:cell morphogenesis"/>
    <property type="evidence" value="ECO:0007669"/>
    <property type="project" value="UniProtKB-UniRule"/>
</dbReference>
<dbReference type="GO" id="GO:0071555">
    <property type="term" value="P:cell wall organization"/>
    <property type="evidence" value="ECO:0007669"/>
    <property type="project" value="UniProtKB-KW"/>
</dbReference>
<dbReference type="GO" id="GO:0009245">
    <property type="term" value="P:lipid A biosynthetic process"/>
    <property type="evidence" value="ECO:0007669"/>
    <property type="project" value="UniProtKB-UniRule"/>
</dbReference>
<dbReference type="GO" id="GO:0009252">
    <property type="term" value="P:peptidoglycan biosynthetic process"/>
    <property type="evidence" value="ECO:0007669"/>
    <property type="project" value="UniProtKB-UniRule"/>
</dbReference>
<dbReference type="GO" id="GO:0008360">
    <property type="term" value="P:regulation of cell shape"/>
    <property type="evidence" value="ECO:0007669"/>
    <property type="project" value="UniProtKB-KW"/>
</dbReference>
<dbReference type="GO" id="GO:0006048">
    <property type="term" value="P:UDP-N-acetylglucosamine biosynthetic process"/>
    <property type="evidence" value="ECO:0007669"/>
    <property type="project" value="UniProtKB-UniPathway"/>
</dbReference>
<dbReference type="CDD" id="cd02540">
    <property type="entry name" value="GT2_GlmU_N_bac"/>
    <property type="match status" value="1"/>
</dbReference>
<dbReference type="CDD" id="cd03353">
    <property type="entry name" value="LbH_GlmU_C"/>
    <property type="match status" value="1"/>
</dbReference>
<dbReference type="Gene3D" id="2.160.10.10">
    <property type="entry name" value="Hexapeptide repeat proteins"/>
    <property type="match status" value="1"/>
</dbReference>
<dbReference type="Gene3D" id="3.90.550.10">
    <property type="entry name" value="Spore Coat Polysaccharide Biosynthesis Protein SpsA, Chain A"/>
    <property type="match status" value="1"/>
</dbReference>
<dbReference type="HAMAP" id="MF_01631">
    <property type="entry name" value="GlmU"/>
    <property type="match status" value="1"/>
</dbReference>
<dbReference type="InterPro" id="IPR005882">
    <property type="entry name" value="Bifunctional_GlmU"/>
</dbReference>
<dbReference type="InterPro" id="IPR050065">
    <property type="entry name" value="GlmU-like"/>
</dbReference>
<dbReference type="InterPro" id="IPR038009">
    <property type="entry name" value="GlmU_C_LbH"/>
</dbReference>
<dbReference type="InterPro" id="IPR001451">
    <property type="entry name" value="Hexapep"/>
</dbReference>
<dbReference type="InterPro" id="IPR025877">
    <property type="entry name" value="MobA-like_NTP_Trfase"/>
</dbReference>
<dbReference type="InterPro" id="IPR029044">
    <property type="entry name" value="Nucleotide-diphossugar_trans"/>
</dbReference>
<dbReference type="InterPro" id="IPR011004">
    <property type="entry name" value="Trimer_LpxA-like_sf"/>
</dbReference>
<dbReference type="NCBIfam" id="TIGR01173">
    <property type="entry name" value="glmU"/>
    <property type="match status" value="1"/>
</dbReference>
<dbReference type="PANTHER" id="PTHR43584:SF3">
    <property type="entry name" value="BIFUNCTIONAL PROTEIN GLMU"/>
    <property type="match status" value="1"/>
</dbReference>
<dbReference type="PANTHER" id="PTHR43584">
    <property type="entry name" value="NUCLEOTIDYL TRANSFERASE"/>
    <property type="match status" value="1"/>
</dbReference>
<dbReference type="Pfam" id="PF00132">
    <property type="entry name" value="Hexapep"/>
    <property type="match status" value="2"/>
</dbReference>
<dbReference type="Pfam" id="PF12804">
    <property type="entry name" value="NTP_transf_3"/>
    <property type="match status" value="1"/>
</dbReference>
<dbReference type="SUPFAM" id="SSF53448">
    <property type="entry name" value="Nucleotide-diphospho-sugar transferases"/>
    <property type="match status" value="1"/>
</dbReference>
<dbReference type="SUPFAM" id="SSF51161">
    <property type="entry name" value="Trimeric LpxA-like enzymes"/>
    <property type="match status" value="1"/>
</dbReference>
<reference key="1">
    <citation type="journal article" date="2000" name="Nature">
        <title>The genome sequence of the plant pathogen Xylella fastidiosa.</title>
        <authorList>
            <person name="Simpson A.J.G."/>
            <person name="Reinach F.C."/>
            <person name="Arruda P."/>
            <person name="Abreu F.A."/>
            <person name="Acencio M."/>
            <person name="Alvarenga R."/>
            <person name="Alves L.M.C."/>
            <person name="Araya J.E."/>
            <person name="Baia G.S."/>
            <person name="Baptista C.S."/>
            <person name="Barros M.H."/>
            <person name="Bonaccorsi E.D."/>
            <person name="Bordin S."/>
            <person name="Bove J.M."/>
            <person name="Briones M.R.S."/>
            <person name="Bueno M.R.P."/>
            <person name="Camargo A.A."/>
            <person name="Camargo L.E.A."/>
            <person name="Carraro D.M."/>
            <person name="Carrer H."/>
            <person name="Colauto N.B."/>
            <person name="Colombo C."/>
            <person name="Costa F.F."/>
            <person name="Costa M.C.R."/>
            <person name="Costa-Neto C.M."/>
            <person name="Coutinho L.L."/>
            <person name="Cristofani M."/>
            <person name="Dias-Neto E."/>
            <person name="Docena C."/>
            <person name="El-Dorry H."/>
            <person name="Facincani A.P."/>
            <person name="Ferreira A.J.S."/>
            <person name="Ferreira V.C.A."/>
            <person name="Ferro J.A."/>
            <person name="Fraga J.S."/>
            <person name="Franca S.C."/>
            <person name="Franco M.C."/>
            <person name="Frohme M."/>
            <person name="Furlan L.R."/>
            <person name="Garnier M."/>
            <person name="Goldman G.H."/>
            <person name="Goldman M.H.S."/>
            <person name="Gomes S.L."/>
            <person name="Gruber A."/>
            <person name="Ho P.L."/>
            <person name="Hoheisel J.D."/>
            <person name="Junqueira M.L."/>
            <person name="Kemper E.L."/>
            <person name="Kitajima J.P."/>
            <person name="Krieger J.E."/>
            <person name="Kuramae E.E."/>
            <person name="Laigret F."/>
            <person name="Lambais M.R."/>
            <person name="Leite L.C.C."/>
            <person name="Lemos E.G.M."/>
            <person name="Lemos M.V.F."/>
            <person name="Lopes S.A."/>
            <person name="Lopes C.R."/>
            <person name="Machado J.A."/>
            <person name="Machado M.A."/>
            <person name="Madeira A.M.B.N."/>
            <person name="Madeira H.M.F."/>
            <person name="Marino C.L."/>
            <person name="Marques M.V."/>
            <person name="Martins E.A.L."/>
            <person name="Martins E.M.F."/>
            <person name="Matsukuma A.Y."/>
            <person name="Menck C.F.M."/>
            <person name="Miracca E.C."/>
            <person name="Miyaki C.Y."/>
            <person name="Monteiro-Vitorello C.B."/>
            <person name="Moon D.H."/>
            <person name="Nagai M.A."/>
            <person name="Nascimento A.L.T.O."/>
            <person name="Netto L.E.S."/>
            <person name="Nhani A. Jr."/>
            <person name="Nobrega F.G."/>
            <person name="Nunes L.R."/>
            <person name="Oliveira M.A."/>
            <person name="de Oliveira M.C."/>
            <person name="de Oliveira R.C."/>
            <person name="Palmieri D.A."/>
            <person name="Paris A."/>
            <person name="Peixoto B.R."/>
            <person name="Pereira G.A.G."/>
            <person name="Pereira H.A. Jr."/>
            <person name="Pesquero J.B."/>
            <person name="Quaggio R.B."/>
            <person name="Roberto P.G."/>
            <person name="Rodrigues V."/>
            <person name="de Rosa A.J.M."/>
            <person name="de Rosa V.E. Jr."/>
            <person name="de Sa R.G."/>
            <person name="Santelli R.V."/>
            <person name="Sawasaki H.E."/>
            <person name="da Silva A.C.R."/>
            <person name="da Silva A.M."/>
            <person name="da Silva F.R."/>
            <person name="Silva W.A. Jr."/>
            <person name="da Silveira J.F."/>
            <person name="Silvestri M.L.Z."/>
            <person name="Siqueira W.J."/>
            <person name="de Souza A.A."/>
            <person name="de Souza A.P."/>
            <person name="Terenzi M.F."/>
            <person name="Truffi D."/>
            <person name="Tsai S.M."/>
            <person name="Tsuhako M.H."/>
            <person name="Vallada H."/>
            <person name="Van Sluys M.A."/>
            <person name="Verjovski-Almeida S."/>
            <person name="Vettore A.L."/>
            <person name="Zago M.A."/>
            <person name="Zatz M."/>
            <person name="Meidanis J."/>
            <person name="Setubal J.C."/>
        </authorList>
    </citation>
    <scope>NUCLEOTIDE SEQUENCE [LARGE SCALE GENOMIC DNA]</scope>
    <source>
        <strain>9a5c</strain>
    </source>
</reference>
<comment type="function">
    <text evidence="1">Catalyzes the last two sequential reactions in the de novo biosynthetic pathway for UDP-N-acetylglucosamine (UDP-GlcNAc). The C-terminal domain catalyzes the transfer of acetyl group from acetyl coenzyme A to glucosamine-1-phosphate (GlcN-1-P) to produce N-acetylglucosamine-1-phosphate (GlcNAc-1-P), which is converted into UDP-GlcNAc by the transfer of uridine 5-monophosphate (from uridine 5-triphosphate), a reaction catalyzed by the N-terminal domain.</text>
</comment>
<comment type="catalytic activity">
    <reaction evidence="1">
        <text>alpha-D-glucosamine 1-phosphate + acetyl-CoA = N-acetyl-alpha-D-glucosamine 1-phosphate + CoA + H(+)</text>
        <dbReference type="Rhea" id="RHEA:13725"/>
        <dbReference type="ChEBI" id="CHEBI:15378"/>
        <dbReference type="ChEBI" id="CHEBI:57287"/>
        <dbReference type="ChEBI" id="CHEBI:57288"/>
        <dbReference type="ChEBI" id="CHEBI:57776"/>
        <dbReference type="ChEBI" id="CHEBI:58516"/>
        <dbReference type="EC" id="2.3.1.157"/>
    </reaction>
</comment>
<comment type="catalytic activity">
    <reaction evidence="1">
        <text>N-acetyl-alpha-D-glucosamine 1-phosphate + UTP + H(+) = UDP-N-acetyl-alpha-D-glucosamine + diphosphate</text>
        <dbReference type="Rhea" id="RHEA:13509"/>
        <dbReference type="ChEBI" id="CHEBI:15378"/>
        <dbReference type="ChEBI" id="CHEBI:33019"/>
        <dbReference type="ChEBI" id="CHEBI:46398"/>
        <dbReference type="ChEBI" id="CHEBI:57705"/>
        <dbReference type="ChEBI" id="CHEBI:57776"/>
        <dbReference type="EC" id="2.7.7.23"/>
    </reaction>
</comment>
<comment type="cofactor">
    <cofactor evidence="1">
        <name>Mg(2+)</name>
        <dbReference type="ChEBI" id="CHEBI:18420"/>
    </cofactor>
    <text evidence="1">Binds 1 Mg(2+) ion per subunit.</text>
</comment>
<comment type="pathway">
    <text evidence="1">Nucleotide-sugar biosynthesis; UDP-N-acetyl-alpha-D-glucosamine biosynthesis; N-acetyl-alpha-D-glucosamine 1-phosphate from alpha-D-glucosamine 6-phosphate (route II): step 2/2.</text>
</comment>
<comment type="pathway">
    <text evidence="1">Nucleotide-sugar biosynthesis; UDP-N-acetyl-alpha-D-glucosamine biosynthesis; UDP-N-acetyl-alpha-D-glucosamine from N-acetyl-alpha-D-glucosamine 1-phosphate: step 1/1.</text>
</comment>
<comment type="pathway">
    <text evidence="1">Bacterial outer membrane biogenesis; LPS lipid A biosynthesis.</text>
</comment>
<comment type="subunit">
    <text evidence="1">Homotrimer.</text>
</comment>
<comment type="subcellular location">
    <subcellularLocation>
        <location evidence="1">Cytoplasm</location>
    </subcellularLocation>
</comment>
<comment type="similarity">
    <text evidence="1">In the N-terminal section; belongs to the N-acetylglucosamine-1-phosphate uridyltransferase family.</text>
</comment>
<comment type="similarity">
    <text evidence="1">In the C-terminal section; belongs to the transferase hexapeptide repeat family.</text>
</comment>
<feature type="chain" id="PRO_0000233886" description="Bifunctional protein GlmU">
    <location>
        <begin position="1"/>
        <end position="457"/>
    </location>
</feature>
<feature type="region of interest" description="Pyrophosphorylase" evidence="1">
    <location>
        <begin position="1"/>
        <end position="230"/>
    </location>
</feature>
<feature type="region of interest" description="Linker" evidence="1">
    <location>
        <begin position="231"/>
        <end position="251"/>
    </location>
</feature>
<feature type="region of interest" description="N-acetyltransferase" evidence="1">
    <location>
        <begin position="252"/>
        <end position="457"/>
    </location>
</feature>
<feature type="active site" description="Proton acceptor" evidence="1">
    <location>
        <position position="364"/>
    </location>
</feature>
<feature type="binding site" evidence="1">
    <location>
        <begin position="12"/>
        <end position="15"/>
    </location>
    <ligand>
        <name>UDP-N-acetyl-alpha-D-glucosamine</name>
        <dbReference type="ChEBI" id="CHEBI:57705"/>
    </ligand>
</feature>
<feature type="binding site" evidence="1">
    <location>
        <position position="26"/>
    </location>
    <ligand>
        <name>UDP-N-acetyl-alpha-D-glucosamine</name>
        <dbReference type="ChEBI" id="CHEBI:57705"/>
    </ligand>
</feature>
<feature type="binding site" evidence="1">
    <location>
        <position position="78"/>
    </location>
    <ligand>
        <name>UDP-N-acetyl-alpha-D-glucosamine</name>
        <dbReference type="ChEBI" id="CHEBI:57705"/>
    </ligand>
</feature>
<feature type="binding site" evidence="1">
    <location>
        <begin position="83"/>
        <end position="84"/>
    </location>
    <ligand>
        <name>UDP-N-acetyl-alpha-D-glucosamine</name>
        <dbReference type="ChEBI" id="CHEBI:57705"/>
    </ligand>
</feature>
<feature type="binding site" evidence="1">
    <location>
        <begin position="105"/>
        <end position="107"/>
    </location>
    <ligand>
        <name>UDP-N-acetyl-alpha-D-glucosamine</name>
        <dbReference type="ChEBI" id="CHEBI:57705"/>
    </ligand>
</feature>
<feature type="binding site" evidence="1">
    <location>
        <position position="107"/>
    </location>
    <ligand>
        <name>Mg(2+)</name>
        <dbReference type="ChEBI" id="CHEBI:18420"/>
    </ligand>
</feature>
<feature type="binding site" evidence="1">
    <location>
        <position position="140"/>
    </location>
    <ligand>
        <name>UDP-N-acetyl-alpha-D-glucosamine</name>
        <dbReference type="ChEBI" id="CHEBI:57705"/>
    </ligand>
</feature>
<feature type="binding site" evidence="1">
    <location>
        <position position="155"/>
    </location>
    <ligand>
        <name>UDP-N-acetyl-alpha-D-glucosamine</name>
        <dbReference type="ChEBI" id="CHEBI:57705"/>
    </ligand>
</feature>
<feature type="binding site" evidence="1">
    <location>
        <position position="170"/>
    </location>
    <ligand>
        <name>UDP-N-acetyl-alpha-D-glucosamine</name>
        <dbReference type="ChEBI" id="CHEBI:57705"/>
    </ligand>
</feature>
<feature type="binding site" evidence="1">
    <location>
        <position position="228"/>
    </location>
    <ligand>
        <name>Mg(2+)</name>
        <dbReference type="ChEBI" id="CHEBI:18420"/>
    </ligand>
</feature>
<feature type="binding site" evidence="1">
    <location>
        <position position="228"/>
    </location>
    <ligand>
        <name>UDP-N-acetyl-alpha-D-glucosamine</name>
        <dbReference type="ChEBI" id="CHEBI:57705"/>
    </ligand>
</feature>
<feature type="binding site" evidence="1">
    <location>
        <position position="334"/>
    </location>
    <ligand>
        <name>UDP-N-acetyl-alpha-D-glucosamine</name>
        <dbReference type="ChEBI" id="CHEBI:57705"/>
    </ligand>
</feature>
<feature type="binding site" evidence="1">
    <location>
        <position position="352"/>
    </location>
    <ligand>
        <name>UDP-N-acetyl-alpha-D-glucosamine</name>
        <dbReference type="ChEBI" id="CHEBI:57705"/>
    </ligand>
</feature>
<feature type="binding site" evidence="1">
    <location>
        <position position="367"/>
    </location>
    <ligand>
        <name>UDP-N-acetyl-alpha-D-glucosamine</name>
        <dbReference type="ChEBI" id="CHEBI:57705"/>
    </ligand>
</feature>
<feature type="binding site" evidence="1">
    <location>
        <position position="378"/>
    </location>
    <ligand>
        <name>UDP-N-acetyl-alpha-D-glucosamine</name>
        <dbReference type="ChEBI" id="CHEBI:57705"/>
    </ligand>
</feature>
<feature type="binding site" evidence="1">
    <location>
        <position position="381"/>
    </location>
    <ligand>
        <name>acetyl-CoA</name>
        <dbReference type="ChEBI" id="CHEBI:57288"/>
    </ligand>
</feature>
<feature type="binding site" evidence="1">
    <location>
        <begin position="387"/>
        <end position="388"/>
    </location>
    <ligand>
        <name>acetyl-CoA</name>
        <dbReference type="ChEBI" id="CHEBI:57288"/>
    </ligand>
</feature>
<feature type="binding site" evidence="1">
    <location>
        <position position="406"/>
    </location>
    <ligand>
        <name>acetyl-CoA</name>
        <dbReference type="ChEBI" id="CHEBI:57288"/>
    </ligand>
</feature>
<feature type="binding site" evidence="1">
    <location>
        <position position="424"/>
    </location>
    <ligand>
        <name>acetyl-CoA</name>
        <dbReference type="ChEBI" id="CHEBI:57288"/>
    </ligand>
</feature>
<feature type="binding site" evidence="1">
    <location>
        <position position="441"/>
    </location>
    <ligand>
        <name>acetyl-CoA</name>
        <dbReference type="ChEBI" id="CHEBI:57288"/>
    </ligand>
</feature>
<sequence length="457" mass="48677">MPLSLPLHIVILAAGEGKRMKSALPKVLHPIAGKPMLAHVITAAQALTPDAIHVVYGHAGNQVRAAFADQTDLHWVEQAQQLGTGHAVKQTMSAIPNAANVLVLYGDVPLIRAETLKRLPRASTPIAVLVTELANPAGYGHIVRNSEGKVAAIIEDKDADEEQRRIHTVNTGILCAESTALRRWLSKLSNTNMQGEYYLTDIFASATADLTPANMIMVTDAREVEGVNDLWQLTQLERAWQIRAARALCLQGARVADPARLDQRGTIRIGQNVHIDIDVVLEGEIELGDNVVIGPFVRLKNVKLGPGTKVHAHCDLEGVTTTGSALIGPFARLRPGTMLADGVHIGNFVETKNTSIGADSKANHLTYLGDAQIGTKVNIGAGTITCNYDGINKSITLIGDGAFIGSHSALIAPVSVGAGATLGAGTVLTHDAPAHQLTVARSRQTTLDSWQRPKKKT</sequence>
<keyword id="KW-0012">Acyltransferase</keyword>
<keyword id="KW-0133">Cell shape</keyword>
<keyword id="KW-0961">Cell wall biogenesis/degradation</keyword>
<keyword id="KW-0963">Cytoplasm</keyword>
<keyword id="KW-0460">Magnesium</keyword>
<keyword id="KW-0479">Metal-binding</keyword>
<keyword id="KW-0511">Multifunctional enzyme</keyword>
<keyword id="KW-0548">Nucleotidyltransferase</keyword>
<keyword id="KW-0573">Peptidoglycan synthesis</keyword>
<keyword id="KW-0677">Repeat</keyword>
<keyword id="KW-0808">Transferase</keyword>
<protein>
    <recommendedName>
        <fullName evidence="1">Bifunctional protein GlmU</fullName>
    </recommendedName>
    <domain>
        <recommendedName>
            <fullName evidence="1">UDP-N-acetylglucosamine pyrophosphorylase</fullName>
            <ecNumber evidence="1">2.7.7.23</ecNumber>
        </recommendedName>
        <alternativeName>
            <fullName evidence="1">N-acetylglucosamine-1-phosphate uridyltransferase</fullName>
        </alternativeName>
    </domain>
    <domain>
        <recommendedName>
            <fullName evidence="1">Glucosamine-1-phosphate N-acetyltransferase</fullName>
            <ecNumber evidence="1">2.3.1.157</ecNumber>
        </recommendedName>
    </domain>
</protein>
<organism>
    <name type="scientific">Xylella fastidiosa (strain 9a5c)</name>
    <dbReference type="NCBI Taxonomy" id="160492"/>
    <lineage>
        <taxon>Bacteria</taxon>
        <taxon>Pseudomonadati</taxon>
        <taxon>Pseudomonadota</taxon>
        <taxon>Gammaproteobacteria</taxon>
        <taxon>Lysobacterales</taxon>
        <taxon>Lysobacteraceae</taxon>
        <taxon>Xylella</taxon>
    </lineage>
</organism>
<name>GLMU_XYLFA</name>
<gene>
    <name evidence="1" type="primary">glmU</name>
    <name type="ordered locus">XF_1140</name>
</gene>